<proteinExistence type="evidence at protein level"/>
<dbReference type="EMBL" id="X69398">
    <property type="protein sequence ID" value="CAA49196.1"/>
    <property type="molecule type" value="mRNA"/>
</dbReference>
<dbReference type="EMBL" id="Z25521">
    <property type="protein sequence ID" value="CAA80977.1"/>
    <property type="molecule type" value="mRNA"/>
</dbReference>
<dbReference type="EMBL" id="BT006907">
    <property type="protein sequence ID" value="AAP35553.1"/>
    <property type="molecule type" value="mRNA"/>
</dbReference>
<dbReference type="EMBL" id="AK289813">
    <property type="protein sequence ID" value="BAF82502.1"/>
    <property type="molecule type" value="mRNA"/>
</dbReference>
<dbReference type="EMBL" id="CH471052">
    <property type="protein sequence ID" value="EAW79733.1"/>
    <property type="molecule type" value="Genomic_DNA"/>
</dbReference>
<dbReference type="EMBL" id="CH471052">
    <property type="protein sequence ID" value="EAW79734.1"/>
    <property type="molecule type" value="Genomic_DNA"/>
</dbReference>
<dbReference type="EMBL" id="BC010016">
    <property type="protein sequence ID" value="AAH10016.1"/>
    <property type="molecule type" value="mRNA"/>
</dbReference>
<dbReference type="EMBL" id="BC012884">
    <property type="protein sequence ID" value="AAH12884.1"/>
    <property type="molecule type" value="mRNA"/>
</dbReference>
<dbReference type="EMBL" id="BC037306">
    <property type="protein sequence ID" value="AAH37306.1"/>
    <property type="molecule type" value="mRNA"/>
</dbReference>
<dbReference type="CCDS" id="CCDS43125.1">
    <molecule id="Q08722-3"/>
</dbReference>
<dbReference type="CCDS" id="CCDS43126.1">
    <molecule id="Q08722-1"/>
</dbReference>
<dbReference type="PIR" id="A48997">
    <property type="entry name" value="A48997"/>
</dbReference>
<dbReference type="RefSeq" id="NP_001768.1">
    <molecule id="Q08722-1"/>
    <property type="nucleotide sequence ID" value="NM_001777.4"/>
</dbReference>
<dbReference type="RefSeq" id="NP_942088.1">
    <molecule id="Q08722-3"/>
    <property type="nucleotide sequence ID" value="NM_198793.3"/>
</dbReference>
<dbReference type="PDB" id="2JJS">
    <property type="method" value="X-ray"/>
    <property type="resolution" value="1.85 A"/>
    <property type="chains" value="C/D=20-136"/>
</dbReference>
<dbReference type="PDB" id="2JJT">
    <property type="method" value="X-ray"/>
    <property type="resolution" value="2.30 A"/>
    <property type="chains" value="C/D=20-136"/>
</dbReference>
<dbReference type="PDB" id="2VSC">
    <property type="method" value="X-ray"/>
    <property type="resolution" value="1.90 A"/>
    <property type="chains" value="A/B/C/D=20-136"/>
</dbReference>
<dbReference type="PDB" id="4CMM">
    <property type="method" value="X-ray"/>
    <property type="resolution" value="1.92 A"/>
    <property type="chains" value="B=20-136"/>
</dbReference>
<dbReference type="PDB" id="4KJY">
    <property type="method" value="X-ray"/>
    <property type="resolution" value="1.93 A"/>
    <property type="chains" value="A/C=19-135"/>
</dbReference>
<dbReference type="PDB" id="5IWL">
    <property type="method" value="X-ray"/>
    <property type="resolution" value="2.80 A"/>
    <property type="chains" value="C/D=20-132"/>
</dbReference>
<dbReference type="PDB" id="5TZ2">
    <property type="method" value="X-ray"/>
    <property type="resolution" value="2.30 A"/>
    <property type="chains" value="C=19-141"/>
</dbReference>
<dbReference type="PDB" id="5TZT">
    <property type="method" value="X-ray"/>
    <property type="resolution" value="2.89 A"/>
    <property type="chains" value="C/D=20-141"/>
</dbReference>
<dbReference type="PDB" id="5TZU">
    <property type="method" value="X-ray"/>
    <property type="resolution" value="2.10 A"/>
    <property type="chains" value="C=19-141"/>
</dbReference>
<dbReference type="PDB" id="7MYZ">
    <property type="method" value="X-ray"/>
    <property type="resolution" value="3.40 A"/>
    <property type="chains" value="C/D=19-323"/>
</dbReference>
<dbReference type="PDB" id="7WN8">
    <property type="method" value="X-ray"/>
    <property type="resolution" value="2.80 A"/>
    <property type="chains" value="A/C=1-323"/>
</dbReference>
<dbReference type="PDB" id="7XJF">
    <property type="method" value="X-ray"/>
    <property type="resolution" value="2.60 A"/>
    <property type="chains" value="C=19-134"/>
</dbReference>
<dbReference type="PDB" id="7YGG">
    <property type="method" value="X-ray"/>
    <property type="resolution" value="2.76 A"/>
    <property type="chains" value="C/D=19-135"/>
</dbReference>
<dbReference type="PDB" id="8RP8">
    <property type="method" value="X-ray"/>
    <property type="resolution" value="2.00 A"/>
    <property type="chains" value="C/D=19-141"/>
</dbReference>
<dbReference type="PDBsum" id="2JJS"/>
<dbReference type="PDBsum" id="2JJT"/>
<dbReference type="PDBsum" id="2VSC"/>
<dbReference type="PDBsum" id="4CMM"/>
<dbReference type="PDBsum" id="4KJY"/>
<dbReference type="PDBsum" id="5IWL"/>
<dbReference type="PDBsum" id="5TZ2"/>
<dbReference type="PDBsum" id="5TZT"/>
<dbReference type="PDBsum" id="5TZU"/>
<dbReference type="PDBsum" id="7MYZ"/>
<dbReference type="PDBsum" id="7WN8"/>
<dbReference type="PDBsum" id="7XJF"/>
<dbReference type="PDBsum" id="7YGG"/>
<dbReference type="PDBsum" id="8RP8"/>
<dbReference type="SMR" id="Q08722"/>
<dbReference type="BioGRID" id="107399">
    <property type="interactions" value="63"/>
</dbReference>
<dbReference type="CORUM" id="Q08722"/>
<dbReference type="DIP" id="DIP-39948N"/>
<dbReference type="FunCoup" id="Q08722">
    <property type="interactions" value="652"/>
</dbReference>
<dbReference type="IntAct" id="Q08722">
    <property type="interactions" value="49"/>
</dbReference>
<dbReference type="MINT" id="Q08722"/>
<dbReference type="STRING" id="9606.ENSP00000355361"/>
<dbReference type="BindingDB" id="Q08722"/>
<dbReference type="ChEMBL" id="CHEMBL3714583"/>
<dbReference type="GuidetoPHARMACOLOGY" id="2943"/>
<dbReference type="TCDB" id="1.N.1.1.1">
    <property type="family name" value="the osteoclast fusion complex (ofc) family"/>
</dbReference>
<dbReference type="GlyConnect" id="1456">
    <property type="glycosylation" value="18 N-Linked glycans (1 site)"/>
</dbReference>
<dbReference type="GlyCosmos" id="Q08722">
    <property type="glycosylation" value="6 sites, 20 glycans"/>
</dbReference>
<dbReference type="GlyGen" id="Q08722">
    <property type="glycosylation" value="7 sites, 84 N-linked glycans (4 sites), 1 O-linked glycan (1 site)"/>
</dbReference>
<dbReference type="iPTMnet" id="Q08722"/>
<dbReference type="PhosphoSitePlus" id="Q08722"/>
<dbReference type="SwissPalm" id="Q08722"/>
<dbReference type="BioMuta" id="CD47"/>
<dbReference type="DMDM" id="1171879"/>
<dbReference type="CPTAC" id="CPTAC-5975"/>
<dbReference type="jPOST" id="Q08722"/>
<dbReference type="MassIVE" id="Q08722"/>
<dbReference type="PaxDb" id="9606-ENSP00000355361"/>
<dbReference type="PeptideAtlas" id="Q08722"/>
<dbReference type="ProteomicsDB" id="58643">
    <molecule id="Q08722-1"/>
</dbReference>
<dbReference type="ProteomicsDB" id="58644">
    <molecule id="Q08722-2"/>
</dbReference>
<dbReference type="ProteomicsDB" id="58645">
    <molecule id="Q08722-3"/>
</dbReference>
<dbReference type="ProteomicsDB" id="58646">
    <molecule id="Q08722-4"/>
</dbReference>
<dbReference type="Pumba" id="Q08722"/>
<dbReference type="ABCD" id="Q08722">
    <property type="antibodies" value="62 sequenced antibodies"/>
</dbReference>
<dbReference type="Antibodypedia" id="4228">
    <property type="antibodies" value="1947 antibodies from 53 providers"/>
</dbReference>
<dbReference type="CPTC" id="Q08722">
    <property type="antibodies" value="4 antibodies"/>
</dbReference>
<dbReference type="DNASU" id="961"/>
<dbReference type="Ensembl" id="ENST00000355354.13">
    <molecule id="Q08722-3"/>
    <property type="protein sequence ID" value="ENSP00000347512.7"/>
    <property type="gene ID" value="ENSG00000196776.17"/>
</dbReference>
<dbReference type="Ensembl" id="ENST00000361309.6">
    <molecule id="Q08722-1"/>
    <property type="protein sequence ID" value="ENSP00000355361.5"/>
    <property type="gene ID" value="ENSG00000196776.17"/>
</dbReference>
<dbReference type="GeneID" id="961"/>
<dbReference type="KEGG" id="hsa:961"/>
<dbReference type="MANE-Select" id="ENST00000361309.6">
    <property type="protein sequence ID" value="ENSP00000355361.5"/>
    <property type="RefSeq nucleotide sequence ID" value="NM_001777.4"/>
    <property type="RefSeq protein sequence ID" value="NP_001768.1"/>
</dbReference>
<dbReference type="UCSC" id="uc003dwt.2">
    <molecule id="Q08722-1"/>
    <property type="organism name" value="human"/>
</dbReference>
<dbReference type="AGR" id="HGNC:1682"/>
<dbReference type="CTD" id="961"/>
<dbReference type="DisGeNET" id="961"/>
<dbReference type="GeneCards" id="CD47"/>
<dbReference type="HGNC" id="HGNC:1682">
    <property type="gene designation" value="CD47"/>
</dbReference>
<dbReference type="HPA" id="ENSG00000196776">
    <property type="expression patterns" value="Low tissue specificity"/>
</dbReference>
<dbReference type="MIM" id="601028">
    <property type="type" value="gene"/>
</dbReference>
<dbReference type="neXtProt" id="NX_Q08722"/>
<dbReference type="OpenTargets" id="ENSG00000196776"/>
<dbReference type="PharmGKB" id="PA26222"/>
<dbReference type="VEuPathDB" id="HostDB:ENSG00000196776"/>
<dbReference type="eggNOG" id="ENOG502RYTQ">
    <property type="taxonomic scope" value="Eukaryota"/>
</dbReference>
<dbReference type="GeneTree" id="ENSGT00390000007697"/>
<dbReference type="HOGENOM" id="CLU_860392_0_0_1"/>
<dbReference type="InParanoid" id="Q08722"/>
<dbReference type="OMA" id="CISECTP"/>
<dbReference type="OrthoDB" id="9447188at2759"/>
<dbReference type="PAN-GO" id="Q08722">
    <property type="GO annotations" value="6 GO annotations based on evolutionary models"/>
</dbReference>
<dbReference type="PhylomeDB" id="Q08722"/>
<dbReference type="TreeFam" id="TF336026"/>
<dbReference type="PathwayCommons" id="Q08722"/>
<dbReference type="Reactome" id="R-HSA-202733">
    <property type="pathway name" value="Cell surface interactions at the vascular wall"/>
</dbReference>
<dbReference type="Reactome" id="R-HSA-216083">
    <property type="pathway name" value="Integrin cell surface interactions"/>
</dbReference>
<dbReference type="Reactome" id="R-HSA-391160">
    <property type="pathway name" value="Signal regulatory protein family interactions"/>
</dbReference>
<dbReference type="Reactome" id="R-HSA-6798695">
    <property type="pathway name" value="Neutrophil degranulation"/>
</dbReference>
<dbReference type="SignaLink" id="Q08722"/>
<dbReference type="SIGNOR" id="Q08722"/>
<dbReference type="BioGRID-ORCS" id="961">
    <property type="hits" value="12 hits in 1163 CRISPR screens"/>
</dbReference>
<dbReference type="ChiTaRS" id="CD47">
    <property type="organism name" value="human"/>
</dbReference>
<dbReference type="EvolutionaryTrace" id="Q08722"/>
<dbReference type="GeneWiki" id="CD47"/>
<dbReference type="GenomeRNAi" id="961"/>
<dbReference type="Pharos" id="Q08722">
    <property type="development level" value="Tchem"/>
</dbReference>
<dbReference type="PRO" id="PR:Q08722"/>
<dbReference type="Proteomes" id="UP000005640">
    <property type="component" value="Chromosome 3"/>
</dbReference>
<dbReference type="RNAct" id="Q08722">
    <property type="molecule type" value="protein"/>
</dbReference>
<dbReference type="Bgee" id="ENSG00000196776">
    <property type="expression patterns" value="Expressed in gingival epithelium and 206 other cell types or tissues"/>
</dbReference>
<dbReference type="ExpressionAtlas" id="Q08722">
    <property type="expression patterns" value="baseline and differential"/>
</dbReference>
<dbReference type="GO" id="GO:0009986">
    <property type="term" value="C:cell surface"/>
    <property type="evidence" value="ECO:0000314"/>
    <property type="project" value="ARUK-UCL"/>
</dbReference>
<dbReference type="GO" id="GO:0070062">
    <property type="term" value="C:extracellular exosome"/>
    <property type="evidence" value="ECO:0000318"/>
    <property type="project" value="GO_Central"/>
</dbReference>
<dbReference type="GO" id="GO:0005886">
    <property type="term" value="C:plasma membrane"/>
    <property type="evidence" value="ECO:0000318"/>
    <property type="project" value="GO_Central"/>
</dbReference>
<dbReference type="GO" id="GO:0035579">
    <property type="term" value="C:specific granule membrane"/>
    <property type="evidence" value="ECO:0000304"/>
    <property type="project" value="Reactome"/>
</dbReference>
<dbReference type="GO" id="GO:0070821">
    <property type="term" value="C:tertiary granule membrane"/>
    <property type="evidence" value="ECO:0000304"/>
    <property type="project" value="Reactome"/>
</dbReference>
<dbReference type="GO" id="GO:0098632">
    <property type="term" value="F:cell-cell adhesion mediator activity"/>
    <property type="evidence" value="ECO:0000353"/>
    <property type="project" value="ARUK-UCL"/>
</dbReference>
<dbReference type="GO" id="GO:0070051">
    <property type="term" value="F:fibrinogen binding"/>
    <property type="evidence" value="ECO:0000314"/>
    <property type="project" value="UniProtKB"/>
</dbReference>
<dbReference type="GO" id="GO:0086080">
    <property type="term" value="F:protein binding involved in heterotypic cell-cell adhesion"/>
    <property type="evidence" value="ECO:0000250"/>
    <property type="project" value="ARUK-UCL"/>
</dbReference>
<dbReference type="GO" id="GO:0070053">
    <property type="term" value="F:thrombospondin receptor activity"/>
    <property type="evidence" value="ECO:0000314"/>
    <property type="project" value="UniProtKB"/>
</dbReference>
<dbReference type="GO" id="GO:0001525">
    <property type="term" value="P:angiogenesis"/>
    <property type="evidence" value="ECO:0007669"/>
    <property type="project" value="UniProtKB-KW"/>
</dbReference>
<dbReference type="GO" id="GO:0006915">
    <property type="term" value="P:apoptotic process"/>
    <property type="evidence" value="ECO:0007669"/>
    <property type="project" value="UniProtKB-KW"/>
</dbReference>
<dbReference type="GO" id="GO:1904669">
    <property type="term" value="P:ATP export"/>
    <property type="evidence" value="ECO:0000314"/>
    <property type="project" value="ARUK-UCL"/>
</dbReference>
<dbReference type="GO" id="GO:0016477">
    <property type="term" value="P:cell migration"/>
    <property type="evidence" value="ECO:0000250"/>
    <property type="project" value="ARUK-UCL"/>
</dbReference>
<dbReference type="GO" id="GO:0071347">
    <property type="term" value="P:cellular response to interleukin-1"/>
    <property type="evidence" value="ECO:0000250"/>
    <property type="project" value="ARUK-UCL"/>
</dbReference>
<dbReference type="GO" id="GO:0071349">
    <property type="term" value="P:cellular response to interleukin-12"/>
    <property type="evidence" value="ECO:0000315"/>
    <property type="project" value="ARUK-UCL"/>
</dbReference>
<dbReference type="GO" id="GO:0071346">
    <property type="term" value="P:cellular response to type II interferon"/>
    <property type="evidence" value="ECO:0000250"/>
    <property type="project" value="ARUK-UCL"/>
</dbReference>
<dbReference type="GO" id="GO:0006954">
    <property type="term" value="P:inflammatory response"/>
    <property type="evidence" value="ECO:0007669"/>
    <property type="project" value="UniProtKB-KW"/>
</dbReference>
<dbReference type="GO" id="GO:0007229">
    <property type="term" value="P:integrin-mediated signaling pathway"/>
    <property type="evidence" value="ECO:0000304"/>
    <property type="project" value="ProtInc"/>
</dbReference>
<dbReference type="GO" id="GO:0050765">
    <property type="term" value="P:negative regulation of phagocytosis"/>
    <property type="evidence" value="ECO:0000250"/>
    <property type="project" value="ARUK-UCL"/>
</dbReference>
<dbReference type="GO" id="GO:0008284">
    <property type="term" value="P:positive regulation of cell population proliferation"/>
    <property type="evidence" value="ECO:0000314"/>
    <property type="project" value="UniProtKB"/>
</dbReference>
<dbReference type="GO" id="GO:0022409">
    <property type="term" value="P:positive regulation of cell-cell adhesion"/>
    <property type="evidence" value="ECO:0000314"/>
    <property type="project" value="UniProtKB"/>
</dbReference>
<dbReference type="GO" id="GO:0050729">
    <property type="term" value="P:positive regulation of inflammatory response"/>
    <property type="evidence" value="ECO:0000318"/>
    <property type="project" value="GO_Central"/>
</dbReference>
<dbReference type="GO" id="GO:2000439">
    <property type="term" value="P:positive regulation of monocyte extravasation"/>
    <property type="evidence" value="ECO:0000250"/>
    <property type="project" value="ARUK-UCL"/>
</dbReference>
<dbReference type="GO" id="GO:0050766">
    <property type="term" value="P:positive regulation of phagocytosis"/>
    <property type="evidence" value="ECO:0000318"/>
    <property type="project" value="GO_Central"/>
</dbReference>
<dbReference type="GO" id="GO:0051496">
    <property type="term" value="P:positive regulation of stress fiber assembly"/>
    <property type="evidence" value="ECO:0000250"/>
    <property type="project" value="ARUK-UCL"/>
</dbReference>
<dbReference type="GO" id="GO:0050870">
    <property type="term" value="P:positive regulation of T cell activation"/>
    <property type="evidence" value="ECO:0000314"/>
    <property type="project" value="UniProtKB"/>
</dbReference>
<dbReference type="GO" id="GO:0060368">
    <property type="term" value="P:regulation of Fc receptor mediated stimulatory signaling pathway"/>
    <property type="evidence" value="ECO:0000250"/>
    <property type="project" value="ARUK-UCL"/>
</dbReference>
<dbReference type="GO" id="GO:0032653">
    <property type="term" value="P:regulation of interleukin-10 production"/>
    <property type="evidence" value="ECO:0000315"/>
    <property type="project" value="ARUK-UCL"/>
</dbReference>
<dbReference type="GO" id="GO:0032655">
    <property type="term" value="P:regulation of interleukin-12 production"/>
    <property type="evidence" value="ECO:0000315"/>
    <property type="project" value="ARUK-UCL"/>
</dbReference>
<dbReference type="GO" id="GO:0032675">
    <property type="term" value="P:regulation of interleukin-6 production"/>
    <property type="evidence" value="ECO:0000315"/>
    <property type="project" value="ARUK-UCL"/>
</dbReference>
<dbReference type="GO" id="GO:0045428">
    <property type="term" value="P:regulation of nitric oxide biosynthetic process"/>
    <property type="evidence" value="ECO:0000250"/>
    <property type="project" value="ARUK-UCL"/>
</dbReference>
<dbReference type="GO" id="GO:0032680">
    <property type="term" value="P:regulation of tumor necrosis factor production"/>
    <property type="evidence" value="ECO:0000315"/>
    <property type="project" value="ARUK-UCL"/>
</dbReference>
<dbReference type="GO" id="GO:0032649">
    <property type="term" value="P:regulation of type II interferon production"/>
    <property type="evidence" value="ECO:0000315"/>
    <property type="project" value="ARUK-UCL"/>
</dbReference>
<dbReference type="CDD" id="cd16090">
    <property type="entry name" value="IgV_CD47"/>
    <property type="match status" value="1"/>
</dbReference>
<dbReference type="FunFam" id="2.60.40.10:FF:000521">
    <property type="entry name" value="leukocyte surface antigen CD47"/>
    <property type="match status" value="1"/>
</dbReference>
<dbReference type="Gene3D" id="2.60.40.10">
    <property type="entry name" value="Immunoglobulins"/>
    <property type="match status" value="1"/>
</dbReference>
<dbReference type="InterPro" id="IPR006704">
    <property type="entry name" value="CD47"/>
</dbReference>
<dbReference type="InterPro" id="IPR013147">
    <property type="entry name" value="CD47-like_TM"/>
</dbReference>
<dbReference type="InterPro" id="IPR013270">
    <property type="entry name" value="CD47_Vset"/>
</dbReference>
<dbReference type="InterPro" id="IPR007110">
    <property type="entry name" value="Ig-like_dom"/>
</dbReference>
<dbReference type="InterPro" id="IPR036179">
    <property type="entry name" value="Ig-like_dom_sf"/>
</dbReference>
<dbReference type="InterPro" id="IPR013783">
    <property type="entry name" value="Ig-like_fold"/>
</dbReference>
<dbReference type="InterPro" id="IPR037805">
    <property type="entry name" value="IgV_CD47"/>
</dbReference>
<dbReference type="PANTHER" id="PTHR10613">
    <property type="entry name" value="LEUKOCYTE SURFACE ANTIGEN CD47"/>
    <property type="match status" value="1"/>
</dbReference>
<dbReference type="PANTHER" id="PTHR10613:SF0">
    <property type="entry name" value="LEUKOCYTE SURFACE ANTIGEN CD47"/>
    <property type="match status" value="1"/>
</dbReference>
<dbReference type="Pfam" id="PF04549">
    <property type="entry name" value="CD47"/>
    <property type="match status" value="1"/>
</dbReference>
<dbReference type="Pfam" id="PF08204">
    <property type="entry name" value="V-set_CD47"/>
    <property type="match status" value="1"/>
</dbReference>
<dbReference type="SUPFAM" id="SSF48726">
    <property type="entry name" value="Immunoglobulin"/>
    <property type="match status" value="1"/>
</dbReference>
<dbReference type="PROSITE" id="PS50835">
    <property type="entry name" value="IG_LIKE"/>
    <property type="match status" value="1"/>
</dbReference>
<accession>Q08722</accession>
<accession>A8K198</accession>
<accession>D3DN59</accession>
<accession>Q53Y71</accession>
<accession>Q96A60</accession>
<comment type="function">
    <text evidence="1 2 6 7 10 14 15 17 18">Adhesive protein that mediates cell-to-cell interactions (PubMed:11509594, PubMed:15383453). Acts as a receptor for thrombospondin THBS1 and as modulator of integrin signaling through the activation of heterotrimeric G proteins (PubMed:19004835, PubMed:7691831, PubMed:8550562). Involved in signal transduction, cardiovascular homeostasis, inflammation, apoptosis, angiogenesis, cellular self-renewal, and immunoregulation (PubMed:11509594, PubMed:15383453, PubMed:19004835, PubMed:27742621, PubMed:32679764, PubMed:7691831, PubMed:8550562). Plays a role in modulating pulmonary endothelin EDN1 signaling (PubMed:27742621). Modulates nitrous oxide (NO) signaling, in response to THBS1, hence playing a role as a pressor agent, supporting blood pressure (By similarity). Plays an important role in memory formation and synaptic plasticity in the hippocampus (By similarity). Receptor for SIRPA, binding to which prevents maturation of immature dendritic cells and inhibits cytokine production by mature dendritic cells (PubMed:11509594). Interaction with SIRPG mediates cell-cell adhesion, enhances superantigen-dependent T-cell-mediated proliferation and costimulates T-cell activation (PubMed:15383453). Positively modulates FAS-dependent apoptosis in T-cells, perhaps by enhancing FAS clustering (By similarity). Plays a role in suppressing angiogenesis and may be involved in metabolic dysregulation during normal aging (PubMed:32679764). In response to THBS1, negatively modulates wound healing (By similarity). Inhibits stem cell self-renewal, in response to THBS1, probably by regulation of the stem cell transcription factors POU5F1/OCT4, SOX2, MYC/c-Myc and KLF4 (By similarity). May play a role in membrane transport and/or integrin dependent signal transduction (PubMed:7691831). May prevent premature elimination of red blood cells (By similarity).</text>
</comment>
<comment type="subunit">
    <text evidence="4 6 7 8 9 10 13 16 18">Monomer (PubMed:18657508). Interacts with THBS1 (via the C-terminal domain) (PubMed:19004835, PubMed:8550562). Interacts with SIRPA (PubMed:11509594). Interacts with FAS/CD95; interaction may be enhanced by functional activation (PubMed:15917238). Interacts with SIRPG, UBQLN1 and UBQLN2 (PubMed:10549293, PubMed:15383453, PubMed:18657508). May interact with fibrinogen (PubMed:22079249). Interacts with Aedes aegypti neutrophil-stimulating factor 1; the interaction results in inhibition of phagocytosis activity of macrophages (PubMed:39121194).</text>
</comment>
<comment type="interaction">
    <interactant intactId="EBI-1268321">
        <id>Q08722</id>
    </interactant>
    <interactant intactId="EBI-745147">
        <id>P78324</id>
        <label>SIRPA</label>
    </interactant>
    <organismsDiffer>false</organismsDiffer>
    <experiments>2</experiments>
</comment>
<comment type="interaction">
    <interactant intactId="EBI-1268321">
        <id>Q08722</id>
    </interactant>
    <interactant intactId="EBI-1268284">
        <id>Q9P1W8</id>
        <label>SIRPG</label>
    </interactant>
    <organismsDiffer>false</organismsDiffer>
    <experiments>2</experiments>
</comment>
<comment type="interaction">
    <interactant intactId="EBI-1268321">
        <id>Q08722</id>
    </interactant>
    <interactant intactId="EBI-7131783">
        <id>Q8N205</id>
        <label>SYNE4</label>
    </interactant>
    <organismsDiffer>false</organismsDiffer>
    <experiments>3</experiments>
</comment>
<comment type="interaction">
    <interactant intactId="EBI-17263290">
        <id>Q08722-3</id>
    </interactant>
    <interactant intactId="EBI-77613">
        <id>P05067</id>
        <label>APP</label>
    </interactant>
    <organismsDiffer>false</organismsDiffer>
    <experiments>3</experiments>
</comment>
<comment type="interaction">
    <interactant intactId="EBI-17263290">
        <id>Q08722-3</id>
    </interactant>
    <interactant intactId="EBI-3923617">
        <id>Q9H2K0</id>
        <label>MTIF3</label>
    </interactant>
    <organismsDiffer>false</organismsDiffer>
    <experiments>3</experiments>
</comment>
<comment type="interaction">
    <interactant intactId="EBI-17263290">
        <id>Q08722-3</id>
    </interactant>
    <interactant intactId="EBI-17263240">
        <id>P15941-11</id>
        <label>MUC1</label>
    </interactant>
    <organismsDiffer>false</organismsDiffer>
    <experiments>3</experiments>
</comment>
<comment type="interaction">
    <interactant intactId="EBI-17263290">
        <id>Q08722-3</id>
    </interactant>
    <interactant intactId="EBI-3919694">
        <id>P15151</id>
        <label>PVR</label>
    </interactant>
    <organismsDiffer>false</organismsDiffer>
    <experiments>3</experiments>
</comment>
<comment type="interaction">
    <interactant intactId="EBI-17263290">
        <id>Q08722-3</id>
    </interactant>
    <interactant intactId="EBI-17684533">
        <id>Q9NRX6</id>
        <label>TMEM167B</label>
    </interactant>
    <organismsDiffer>false</organismsDiffer>
    <experiments>3</experiments>
</comment>
<comment type="subcellular location">
    <subcellularLocation>
        <location evidence="16 17">Cell membrane</location>
        <topology evidence="17">Multi-pass membrane protein</topology>
    </subcellularLocation>
</comment>
<comment type="alternative products">
    <event type="alternative splicing"/>
    <isoform>
        <id>Q08722-1</id>
        <name>OA3-323</name>
        <sequence type="displayed"/>
    </isoform>
    <isoform>
        <id>Q08722-2</id>
        <name>OA3-293</name>
        <sequence type="described" ref="VSP_002535"/>
    </isoform>
    <isoform>
        <id>Q08722-3</id>
        <name>OA3-305</name>
        <sequence type="described" ref="VSP_002536 VSP_002537"/>
    </isoform>
    <isoform>
        <id>Q08722-4</id>
        <name>OA3-312</name>
        <sequence type="described" ref="VSP_002538"/>
    </isoform>
</comment>
<comment type="tissue specificity">
    <text evidence="16">Very broadly distributed on normal adult tissues, as well as ovarian tumors, being especially abundant in some epithelia and the brain. Macrophages (PubMed:39121194).</text>
</comment>
<comment type="induction">
    <text evidence="14 15">Induced in pulmonary artery and lung parenchyma following injury or stress (PubMed:27742621). Expression in arteries increases in normal aging (PubMed:32679764).</text>
</comment>
<evidence type="ECO:0000250" key="1">
    <source>
        <dbReference type="UniProtKB" id="P97829"/>
    </source>
</evidence>
<evidence type="ECO:0000250" key="2">
    <source>
        <dbReference type="UniProtKB" id="Q61735"/>
    </source>
</evidence>
<evidence type="ECO:0000255" key="3"/>
<evidence type="ECO:0000269" key="4">
    <source>
    </source>
</evidence>
<evidence type="ECO:0000269" key="5">
    <source>
    </source>
</evidence>
<evidence type="ECO:0000269" key="6">
    <source>
    </source>
</evidence>
<evidence type="ECO:0000269" key="7">
    <source>
    </source>
</evidence>
<evidence type="ECO:0000269" key="8">
    <source>
    </source>
</evidence>
<evidence type="ECO:0000269" key="9">
    <source>
    </source>
</evidence>
<evidence type="ECO:0000269" key="10">
    <source>
    </source>
</evidence>
<evidence type="ECO:0000269" key="11">
    <source>
    </source>
</evidence>
<evidence type="ECO:0000269" key="12">
    <source>
    </source>
</evidence>
<evidence type="ECO:0000269" key="13">
    <source>
    </source>
</evidence>
<evidence type="ECO:0000269" key="14">
    <source>
    </source>
</evidence>
<evidence type="ECO:0000269" key="15">
    <source>
    </source>
</evidence>
<evidence type="ECO:0000269" key="16">
    <source>
    </source>
</evidence>
<evidence type="ECO:0000269" key="17">
    <source>
    </source>
</evidence>
<evidence type="ECO:0000269" key="18">
    <source>
    </source>
</evidence>
<evidence type="ECO:0000303" key="19">
    <source>
    </source>
</evidence>
<evidence type="ECO:0000303" key="20">
    <source>
    </source>
</evidence>
<evidence type="ECO:0000303" key="21">
    <source ref="3"/>
</evidence>
<evidence type="ECO:0000305" key="22"/>
<evidence type="ECO:0007829" key="23">
    <source>
        <dbReference type="PDB" id="2JJS"/>
    </source>
</evidence>
<evidence type="ECO:0007829" key="24">
    <source>
        <dbReference type="PDB" id="7MYZ"/>
    </source>
</evidence>
<keyword id="KW-0002">3D-structure</keyword>
<keyword id="KW-0025">Alternative splicing</keyword>
<keyword id="KW-0037">Angiogenesis</keyword>
<keyword id="KW-0053">Apoptosis</keyword>
<keyword id="KW-0130">Cell adhesion</keyword>
<keyword id="KW-1003">Cell membrane</keyword>
<keyword id="KW-0903">Direct protein sequencing</keyword>
<keyword id="KW-1015">Disulfide bond</keyword>
<keyword id="KW-0325">Glycoprotein</keyword>
<keyword id="KW-0393">Immunoglobulin domain</keyword>
<keyword id="KW-0395">Inflammatory response</keyword>
<keyword id="KW-0472">Membrane</keyword>
<keyword id="KW-0597">Phosphoprotein</keyword>
<keyword id="KW-1267">Proteomics identification</keyword>
<keyword id="KW-0873">Pyrrolidone carboxylic acid</keyword>
<keyword id="KW-1185">Reference proteome</keyword>
<keyword id="KW-0732">Signal</keyword>
<keyword id="KW-0812">Transmembrane</keyword>
<keyword id="KW-1133">Transmembrane helix</keyword>
<gene>
    <name type="primary">CD47</name>
    <name type="synonym">MER6</name>
</gene>
<reference key="1">
    <citation type="journal article" date="1992" name="Cancer Res.">
        <title>An ovarian tumor marker with homology to vaccinia virus contains an IgV-like region and multiple transmembrane domains.</title>
        <authorList>
            <person name="Campbell I.G."/>
            <person name="Freemont P.S."/>
            <person name="Foulkes W."/>
            <person name="Trowsdale J."/>
        </authorList>
    </citation>
    <scope>NUCLEOTIDE SEQUENCE [MRNA] (ISOFORM OA3-323)</scope>
    <source>
        <tissue>Ovary</tissue>
    </source>
</reference>
<reference key="2">
    <citation type="journal article" date="1993" name="J. Cell Biol.">
        <title>Molecular cloning of integrin-associated protein: an immunoglobulin family member with multiple membrane spanning domains implicated in alpha-v beta-3-dependent ligand binding.</title>
        <authorList>
            <person name="Lindberg F.P."/>
            <person name="Gresham H.D."/>
            <person name="Schwarz E."/>
            <person name="Brown E.J."/>
        </authorList>
    </citation>
    <scope>NUCLEOTIDE SEQUENCE [MRNA] (ISOFORM OA3-305)</scope>
    <scope>FUNCTION</scope>
    <scope>SUBCELLULAR LOCATION</scope>
    <scope>TOPOLOGY</scope>
    <source>
        <tissue>Myelomonocyte</tissue>
    </source>
</reference>
<reference key="3">
    <citation type="submission" date="2003-05" db="EMBL/GenBank/DDBJ databases">
        <title>Cloning of human full-length CDSs in BD Creator(TM) system donor vector.</title>
        <authorList>
            <person name="Kalnine N."/>
            <person name="Chen X."/>
            <person name="Rolfs A."/>
            <person name="Halleck A."/>
            <person name="Hines L."/>
            <person name="Eisenstein S."/>
            <person name="Koundinya M."/>
            <person name="Raphael J."/>
            <person name="Moreira D."/>
            <person name="Kelley T."/>
            <person name="LaBaer J."/>
            <person name="Lin Y."/>
            <person name="Phelan M."/>
            <person name="Farmer A."/>
        </authorList>
    </citation>
    <scope>NUCLEOTIDE SEQUENCE [LARGE SCALE MRNA] (ISOFORM OA3-305)</scope>
</reference>
<reference key="4">
    <citation type="journal article" date="2004" name="Nat. Genet.">
        <title>Complete sequencing and characterization of 21,243 full-length human cDNAs.</title>
        <authorList>
            <person name="Ota T."/>
            <person name="Suzuki Y."/>
            <person name="Nishikawa T."/>
            <person name="Otsuki T."/>
            <person name="Sugiyama T."/>
            <person name="Irie R."/>
            <person name="Wakamatsu A."/>
            <person name="Hayashi K."/>
            <person name="Sato H."/>
            <person name="Nagai K."/>
            <person name="Kimura K."/>
            <person name="Makita H."/>
            <person name="Sekine M."/>
            <person name="Obayashi M."/>
            <person name="Nishi T."/>
            <person name="Shibahara T."/>
            <person name="Tanaka T."/>
            <person name="Ishii S."/>
            <person name="Yamamoto J."/>
            <person name="Saito K."/>
            <person name="Kawai Y."/>
            <person name="Isono Y."/>
            <person name="Nakamura Y."/>
            <person name="Nagahari K."/>
            <person name="Murakami K."/>
            <person name="Yasuda T."/>
            <person name="Iwayanagi T."/>
            <person name="Wagatsuma M."/>
            <person name="Shiratori A."/>
            <person name="Sudo H."/>
            <person name="Hosoiri T."/>
            <person name="Kaku Y."/>
            <person name="Kodaira H."/>
            <person name="Kondo H."/>
            <person name="Sugawara M."/>
            <person name="Takahashi M."/>
            <person name="Kanda K."/>
            <person name="Yokoi T."/>
            <person name="Furuya T."/>
            <person name="Kikkawa E."/>
            <person name="Omura Y."/>
            <person name="Abe K."/>
            <person name="Kamihara K."/>
            <person name="Katsuta N."/>
            <person name="Sato K."/>
            <person name="Tanikawa M."/>
            <person name="Yamazaki M."/>
            <person name="Ninomiya K."/>
            <person name="Ishibashi T."/>
            <person name="Yamashita H."/>
            <person name="Murakawa K."/>
            <person name="Fujimori K."/>
            <person name="Tanai H."/>
            <person name="Kimata M."/>
            <person name="Watanabe M."/>
            <person name="Hiraoka S."/>
            <person name="Chiba Y."/>
            <person name="Ishida S."/>
            <person name="Ono Y."/>
            <person name="Takiguchi S."/>
            <person name="Watanabe S."/>
            <person name="Yosida M."/>
            <person name="Hotuta T."/>
            <person name="Kusano J."/>
            <person name="Kanehori K."/>
            <person name="Takahashi-Fujii A."/>
            <person name="Hara H."/>
            <person name="Tanase T.-O."/>
            <person name="Nomura Y."/>
            <person name="Togiya S."/>
            <person name="Komai F."/>
            <person name="Hara R."/>
            <person name="Takeuchi K."/>
            <person name="Arita M."/>
            <person name="Imose N."/>
            <person name="Musashino K."/>
            <person name="Yuuki H."/>
            <person name="Oshima A."/>
            <person name="Sasaki N."/>
            <person name="Aotsuka S."/>
            <person name="Yoshikawa Y."/>
            <person name="Matsunawa H."/>
            <person name="Ichihara T."/>
            <person name="Shiohata N."/>
            <person name="Sano S."/>
            <person name="Moriya S."/>
            <person name="Momiyama H."/>
            <person name="Satoh N."/>
            <person name="Takami S."/>
            <person name="Terashima Y."/>
            <person name="Suzuki O."/>
            <person name="Nakagawa S."/>
            <person name="Senoh A."/>
            <person name="Mizoguchi H."/>
            <person name="Goto Y."/>
            <person name="Shimizu F."/>
            <person name="Wakebe H."/>
            <person name="Hishigaki H."/>
            <person name="Watanabe T."/>
            <person name="Sugiyama A."/>
            <person name="Takemoto M."/>
            <person name="Kawakami B."/>
            <person name="Yamazaki M."/>
            <person name="Watanabe K."/>
            <person name="Kumagai A."/>
            <person name="Itakura S."/>
            <person name="Fukuzumi Y."/>
            <person name="Fujimori Y."/>
            <person name="Komiyama M."/>
            <person name="Tashiro H."/>
            <person name="Tanigami A."/>
            <person name="Fujiwara T."/>
            <person name="Ono T."/>
            <person name="Yamada K."/>
            <person name="Fujii Y."/>
            <person name="Ozaki K."/>
            <person name="Hirao M."/>
            <person name="Ohmori Y."/>
            <person name="Kawabata A."/>
            <person name="Hikiji T."/>
            <person name="Kobatake N."/>
            <person name="Inagaki H."/>
            <person name="Ikema Y."/>
            <person name="Okamoto S."/>
            <person name="Okitani R."/>
            <person name="Kawakami T."/>
            <person name="Noguchi S."/>
            <person name="Itoh T."/>
            <person name="Shigeta K."/>
            <person name="Senba T."/>
            <person name="Matsumura K."/>
            <person name="Nakajima Y."/>
            <person name="Mizuno T."/>
            <person name="Morinaga M."/>
            <person name="Sasaki M."/>
            <person name="Togashi T."/>
            <person name="Oyama M."/>
            <person name="Hata H."/>
            <person name="Watanabe M."/>
            <person name="Komatsu T."/>
            <person name="Mizushima-Sugano J."/>
            <person name="Satoh T."/>
            <person name="Shirai Y."/>
            <person name="Takahashi Y."/>
            <person name="Nakagawa K."/>
            <person name="Okumura K."/>
            <person name="Nagase T."/>
            <person name="Nomura N."/>
            <person name="Kikuchi H."/>
            <person name="Masuho Y."/>
            <person name="Yamashita R."/>
            <person name="Nakai K."/>
            <person name="Yada T."/>
            <person name="Nakamura Y."/>
            <person name="Ohara O."/>
            <person name="Isogai T."/>
            <person name="Sugano S."/>
        </authorList>
    </citation>
    <scope>NUCLEOTIDE SEQUENCE [LARGE SCALE MRNA] (ISOFORM OA3-323)</scope>
    <source>
        <tissue>Brain</tissue>
    </source>
</reference>
<reference key="5">
    <citation type="submission" date="2005-09" db="EMBL/GenBank/DDBJ databases">
        <authorList>
            <person name="Mural R.J."/>
            <person name="Istrail S."/>
            <person name="Sutton G.G."/>
            <person name="Florea L."/>
            <person name="Halpern A.L."/>
            <person name="Mobarry C.M."/>
            <person name="Lippert R."/>
            <person name="Walenz B."/>
            <person name="Shatkay H."/>
            <person name="Dew I."/>
            <person name="Miller J.R."/>
            <person name="Flanigan M.J."/>
            <person name="Edwards N.J."/>
            <person name="Bolanos R."/>
            <person name="Fasulo D."/>
            <person name="Halldorsson B.V."/>
            <person name="Hannenhalli S."/>
            <person name="Turner R."/>
            <person name="Yooseph S."/>
            <person name="Lu F."/>
            <person name="Nusskern D.R."/>
            <person name="Shue B.C."/>
            <person name="Zheng X.H."/>
            <person name="Zhong F."/>
            <person name="Delcher A.L."/>
            <person name="Huson D.H."/>
            <person name="Kravitz S.A."/>
            <person name="Mouchard L."/>
            <person name="Reinert K."/>
            <person name="Remington K.A."/>
            <person name="Clark A.G."/>
            <person name="Waterman M.S."/>
            <person name="Eichler E.E."/>
            <person name="Adams M.D."/>
            <person name="Hunkapiller M.W."/>
            <person name="Myers E.W."/>
            <person name="Venter J.C."/>
        </authorList>
    </citation>
    <scope>NUCLEOTIDE SEQUENCE [LARGE SCALE GENOMIC DNA]</scope>
</reference>
<reference key="6">
    <citation type="journal article" date="2004" name="Genome Res.">
        <title>The status, quality, and expansion of the NIH full-length cDNA project: the Mammalian Gene Collection (MGC).</title>
        <authorList>
            <consortium name="The MGC Project Team"/>
        </authorList>
    </citation>
    <scope>NUCLEOTIDE SEQUENCE [LARGE SCALE MRNA] (ISOFORM OA3-305)</scope>
    <source>
        <tissue>Hippocampus</tissue>
        <tissue>Leiomyosarcoma</tissue>
        <tissue>Ovarian adenocarcinoma</tissue>
    </source>
</reference>
<reference key="7">
    <citation type="journal article" date="1994" name="Biochem. J.">
        <title>Isolation and characterization of CD47 glycoprotein: a multispanning membrane protein which is the same as integrin-associated protein (IAP) and the ovarian tumour marker OA3.</title>
        <authorList>
            <person name="Mawby W.J."/>
            <person name="Holmes C.H."/>
            <person name="Anstee D.J."/>
            <person name="Spring F.A."/>
            <person name="Tanner M.J.A."/>
        </authorList>
    </citation>
    <scope>PROTEIN SEQUENCE OF 27-40; 60-75; 104-116; 169-197 AND 206-212</scope>
    <scope>IDENTIFICATION AS CD47</scope>
    <source>
        <tissue>Erythrocyte</tissue>
    </source>
</reference>
<reference key="8">
    <citation type="journal article" date="1996" name="J. Biol. Chem.">
        <title>Integrin-associated protein is a receptor for the C-terminal domain of thrombospondin.</title>
        <authorList>
            <person name="Gao A.G."/>
            <person name="Lindberg F.P."/>
            <person name="Finn M.B."/>
            <person name="Blystone S.D."/>
            <person name="Brown E.J."/>
            <person name="Frazier W.A."/>
        </authorList>
    </citation>
    <scope>FUNCTION</scope>
    <scope>INTERACTION WITH THBS1</scope>
</reference>
<reference key="9">
    <citation type="journal article" date="1999" name="Mol. Cell">
        <title>Ubiquitin-related proteins regulate interaction of vimentin intermediate filaments with the plasma membrane.</title>
        <authorList>
            <person name="Wu A.-L."/>
            <person name="Wang J."/>
            <person name="Zheleznyak A."/>
            <person name="Brown E.J."/>
        </authorList>
    </citation>
    <scope>INTERACTION WITH UBQLN1 AND UBQLN2</scope>
</reference>
<reference key="10">
    <citation type="journal article" date="2001" name="J. Biol. Chem.">
        <title>Normal ligand binding and signaling by CD47 (integrin-associated protein) requires a long range disulfide bond between the extracellular and membrane-spanning domains.</title>
        <authorList>
            <person name="Rebres R.A."/>
            <person name="Vaz L.E."/>
            <person name="Green J.M."/>
            <person name="Brown E.J."/>
        </authorList>
    </citation>
    <scope>DISULFIDE BOND</scope>
</reference>
<reference key="11">
    <citation type="journal article" date="2001" name="J. Immunol.">
        <title>Bidirectional negative regulation of human T and dendritic cells by CD47 and its cognate receptor signal-regulator protein-alpha: down-regulation of IL-12 responsiveness and inhibition of dendritic cell activation.</title>
        <authorList>
            <person name="Latour S."/>
            <person name="Tanaka H."/>
            <person name="Demeure C."/>
            <person name="Mateo V."/>
            <person name="Rubio M."/>
            <person name="Brown E.J."/>
            <person name="Maliszewski C."/>
            <person name="Lindberg F.P."/>
            <person name="Oldenborg A."/>
            <person name="Ullrich A."/>
            <person name="Delespesse G."/>
            <person name="Sarfati M."/>
        </authorList>
    </citation>
    <scope>FUNCTION</scope>
    <scope>INTERACTION WITH SIRPA</scope>
</reference>
<reference key="12">
    <citation type="journal article" date="2005" name="Blood">
        <title>Adhesion of human T cells to antigen-presenting cells through SIRPbeta2-CD47 interaction costimulates T-cell proliferation.</title>
        <authorList>
            <person name="Piccio L."/>
            <person name="Vermi W."/>
            <person name="Boles K.S."/>
            <person name="Fuchs A."/>
            <person name="Strader C.A."/>
            <person name="Facchetti F."/>
            <person name="Cella M."/>
            <person name="Colonna M."/>
        </authorList>
    </citation>
    <scope>FUNCTION</scope>
    <scope>INTERACTION WITH SIRPG</scope>
    <source>
        <tissue>T-cell</tissue>
    </source>
</reference>
<reference key="13">
    <citation type="journal article" date="2005" name="J. Biol. Chem.">
        <title>CD47 augments Fas/CD95-mediated apoptosis.</title>
        <authorList>
            <person name="Manna P.P."/>
            <person name="Dimitry J."/>
            <person name="Oldenborg P.A."/>
            <person name="Frazier W.A."/>
        </authorList>
    </citation>
    <scope>INTERACTION WITH FAS/CD95</scope>
</reference>
<reference key="14">
    <citation type="journal article" date="2009" name="J. Biol. Chem.">
        <title>Differential interactions of thrombospondin-1, -2, and -4 with CD47 and effects on cGMP signaling and ischemic injury responses.</title>
        <authorList>
            <person name="Isenberg J.S."/>
            <person name="Annis D.S."/>
            <person name="Pendrak M.L."/>
            <person name="Ptaszynska M."/>
            <person name="Frazier W.A."/>
            <person name="Mosher D.F."/>
            <person name="Roberts D.D."/>
        </authorList>
    </citation>
    <scope>FUNCTION</scope>
    <scope>INTERACTION WITH THBS1</scope>
</reference>
<reference key="15">
    <citation type="journal article" date="2009" name="J. Proteome Res.">
        <title>Glycoproteomics analysis of human liver tissue by combination of multiple enzyme digestion and hydrazide chemistry.</title>
        <authorList>
            <person name="Chen R."/>
            <person name="Jiang X."/>
            <person name="Sun D."/>
            <person name="Han G."/>
            <person name="Wang F."/>
            <person name="Ye M."/>
            <person name="Wang L."/>
            <person name="Zou H."/>
        </authorList>
    </citation>
    <scope>GLYCOSYLATION [LARGE SCALE ANALYSIS] AT ASN-73 AND ASN-111</scope>
    <source>
        <tissue>Liver</tissue>
    </source>
</reference>
<reference key="16">
    <citation type="journal article" date="2009" name="Nat. Biotechnol.">
        <title>Mass-spectrometric identification and relative quantification of N-linked cell surface glycoproteins.</title>
        <authorList>
            <person name="Wollscheid B."/>
            <person name="Bausch-Fluck D."/>
            <person name="Henderson C."/>
            <person name="O'Brien R."/>
            <person name="Bibel M."/>
            <person name="Schiess R."/>
            <person name="Aebersold R."/>
            <person name="Watts J.D."/>
        </authorList>
    </citation>
    <scope>GLYCOSYLATION [LARGE SCALE ANALYSIS] AT ASN-50 AND ASN-73</scope>
    <source>
        <tissue>Leukemic T-cell</tissue>
    </source>
</reference>
<reference key="17">
    <citation type="journal article" date="2012" name="Biochim. Biophys. Acta">
        <title>Integrin-associated protein (CD47) is a putative mediator for soluble fibrinogen interaction with human red blood cells membrane.</title>
        <authorList>
            <person name="De Oliveira S."/>
            <person name="Vitorino de Almeida V."/>
            <person name="Calado A."/>
            <person name="Rosario H.S."/>
            <person name="Saldanha C."/>
        </authorList>
    </citation>
    <scope>INTERACTION WITH FIBRINOGEN</scope>
</reference>
<reference key="18">
    <citation type="journal article" date="2015" name="Proteomics">
        <title>N-terminome analysis of the human mitochondrial proteome.</title>
        <authorList>
            <person name="Vaca Jacome A.S."/>
            <person name="Rabilloud T."/>
            <person name="Schaeffer-Reiss C."/>
            <person name="Rompais M."/>
            <person name="Ayoub D."/>
            <person name="Lane L."/>
            <person name="Bairoch A."/>
            <person name="Van Dorsselaer A."/>
            <person name="Carapito C."/>
        </authorList>
    </citation>
    <scope>IDENTIFICATION BY MASS SPECTROMETRY [LARGE SCALE ANALYSIS]</scope>
</reference>
<reference key="19">
    <citation type="journal article" date="2017" name="Cardiovasc. Res.">
        <title>TSP1-CD47 signaling is upregulated in clinical pulmonary hypertension and contributes to pulmonary arterial vasculopathy and dysfunction.</title>
        <authorList>
            <person name="Rogers N.M."/>
            <person name="Sharifi-Sanjani M."/>
            <person name="Yao M."/>
            <person name="Ghimire K."/>
            <person name="Bienes-Martinez R."/>
            <person name="Mutchler S.M."/>
            <person name="Knupp H.E."/>
            <person name="Baust J."/>
            <person name="Novelli E.M."/>
            <person name="Ross M."/>
            <person name="St Croix C."/>
            <person name="Kutten J.C."/>
            <person name="Czajka C.A."/>
            <person name="Sembrat J.C."/>
            <person name="Rojas M."/>
            <person name="Labrousse-Arias D."/>
            <person name="Bachman T.N."/>
            <person name="Vanderpool R.R."/>
            <person name="Zuckerbraun B.S."/>
            <person name="Champion H.C."/>
            <person name="Mora A.L."/>
            <person name="Straub A.C."/>
            <person name="Bilonick R.A."/>
            <person name="Calzada M.J."/>
            <person name="Isenberg J.S."/>
        </authorList>
    </citation>
    <scope>FUNCTION</scope>
    <scope>INDUCTION</scope>
</reference>
<reference key="20">
    <citation type="journal article" date="2020" name="Cells">
        <title>CD47 Promotes Age-Associated Deterioration in Angiogenesis, Blood Flow and Glucose Homeostasis.</title>
        <authorList>
            <person name="Ghimire K."/>
            <person name="Li Y."/>
            <person name="Chiba T."/>
            <person name="Julovi S.M."/>
            <person name="Li J."/>
            <person name="Ross M.A."/>
            <person name="Straub A.C."/>
            <person name="O'Connell P.J."/>
            <person name="Rueegg C."/>
            <person name="Pagano P.J."/>
            <person name="Isenberg J.S."/>
            <person name="Rogers N.M."/>
        </authorList>
    </citation>
    <scope>FUNCTION</scope>
    <scope>INDUCTION</scope>
</reference>
<reference key="21">
    <citation type="journal article" date="2024" name="Sci. Immunol.">
        <title>The human CD47 checkpoint is targeted by an immunosuppressive Aedes aegypti salivary factor to enhance arboviral skin infectivity.</title>
        <authorList>
            <person name="Marin-Lopez A."/>
            <person name="Huck J.D."/>
            <person name="Esterly A.T."/>
            <person name="Azcutia V."/>
            <person name="Rosen C."/>
            <person name="Garcia-Milian R."/>
            <person name="Sefik E."/>
            <person name="Vidal-Pedrola G."/>
            <person name="Raduwan H."/>
            <person name="Chen T.Y."/>
            <person name="Arora G."/>
            <person name="Halene S."/>
            <person name="Shaw A.C."/>
            <person name="Palm N.W."/>
            <person name="Flavell R.A."/>
            <person name="Parkos C.A."/>
            <person name="Thangamani S."/>
            <person name="Ring A.M."/>
            <person name="Fikrig E."/>
        </authorList>
    </citation>
    <scope>INTERACTION WITH MOSQUITO NEUTROPHIL-STIMULATING FACTOR 1</scope>
    <scope>SUBCELLULAR LOCATION</scope>
    <scope>TISSUE SPECIFICITY</scope>
</reference>
<reference key="22">
    <citation type="journal article" date="2008" name="Mol. Cell">
        <title>Paired receptor specificity explained by structures of signal regulatory proteins alone and complexed with CD47.</title>
        <authorList>
            <person name="Hatherley D."/>
            <person name="Graham S.C."/>
            <person name="Turner J."/>
            <person name="Harlos K."/>
            <person name="Stuart D.I."/>
            <person name="Barclay A.N."/>
        </authorList>
    </citation>
    <scope>X-RAY CRYSTALLOGRAPHY (1.85 ANGSTROMS) OF 19-136 IN COMPLEX WITH SIRPA</scope>
    <scope>DISULFIDE BOND</scope>
    <scope>GLYCOSYLATION AT ASN-23; ASN-50; ASN-73 AND ASN-111</scope>
    <scope>PYROGLUTAMATE FORMATION AT GLN-19</scope>
</reference>
<sequence length="323" mass="35214">MWPLVAALLLGSACCGSAQLLFNKTKSVEFTFCNDTVVIPCFVTNMEAQNTTEVYVKWKFKGRDIYTFDGALNKSTVPTDFSSAKIEVSQLLKGDASLKMDKSDAVSHTGNYTCEVTELTREGETIIELKYRVVSWFSPNENILIVIFPIFAILLFWGQFGIKTLKYRSGGMDEKTIALLVAGLVITVIVIVGAILFVPGEYSLKNATGLGLIVTSTGILILLHYYVFSTAIGLTSFVIAILVIQVIAYILAVVGLSLCIAACIPMHGPLLISGLSILALAQLLGLVYMKFVASNQKTIQPPRKAVEEPLNAFKESKGMMNDE</sequence>
<organism>
    <name type="scientific">Homo sapiens</name>
    <name type="common">Human</name>
    <dbReference type="NCBI Taxonomy" id="9606"/>
    <lineage>
        <taxon>Eukaryota</taxon>
        <taxon>Metazoa</taxon>
        <taxon>Chordata</taxon>
        <taxon>Craniata</taxon>
        <taxon>Vertebrata</taxon>
        <taxon>Euteleostomi</taxon>
        <taxon>Mammalia</taxon>
        <taxon>Eutheria</taxon>
        <taxon>Euarchontoglires</taxon>
        <taxon>Primates</taxon>
        <taxon>Haplorrhini</taxon>
        <taxon>Catarrhini</taxon>
        <taxon>Hominidae</taxon>
        <taxon>Homo</taxon>
    </lineage>
</organism>
<name>CD47_HUMAN</name>
<protein>
    <recommendedName>
        <fullName>Leukocyte surface antigen CD47</fullName>
    </recommendedName>
    <alternativeName>
        <fullName>Antigenic surface determinant protein OA3</fullName>
    </alternativeName>
    <alternativeName>
        <fullName>Integrin-associated protein</fullName>
        <shortName>IAP</shortName>
    </alternativeName>
    <alternativeName>
        <fullName>Protein MER6</fullName>
    </alternativeName>
    <cdAntigenName>CD47</cdAntigenName>
</protein>
<feature type="signal peptide" evidence="3">
    <location>
        <begin position="1"/>
        <end position="18"/>
    </location>
</feature>
<feature type="chain" id="PRO_0000014880" description="Leukocyte surface antigen CD47">
    <location>
        <begin position="19"/>
        <end position="323"/>
    </location>
</feature>
<feature type="topological domain" description="Extracellular" evidence="3">
    <location>
        <begin position="19"/>
        <end position="141"/>
    </location>
</feature>
<feature type="transmembrane region" description="Helical" evidence="3">
    <location>
        <begin position="142"/>
        <end position="162"/>
    </location>
</feature>
<feature type="topological domain" description="Cytoplasmic" evidence="3">
    <location>
        <begin position="163"/>
        <end position="176"/>
    </location>
</feature>
<feature type="transmembrane region" description="Helical" evidence="3">
    <location>
        <begin position="177"/>
        <end position="197"/>
    </location>
</feature>
<feature type="topological domain" description="Extracellular" evidence="3">
    <location>
        <begin position="198"/>
        <end position="207"/>
    </location>
</feature>
<feature type="transmembrane region" description="Helical" evidence="3">
    <location>
        <begin position="208"/>
        <end position="228"/>
    </location>
</feature>
<feature type="topological domain" description="Cytoplasmic" evidence="3">
    <location>
        <begin position="229"/>
        <end position="235"/>
    </location>
</feature>
<feature type="transmembrane region" description="Helical" evidence="3">
    <location>
        <begin position="236"/>
        <end position="256"/>
    </location>
</feature>
<feature type="topological domain" description="Extracellular" evidence="3">
    <location>
        <begin position="257"/>
        <end position="268"/>
    </location>
</feature>
<feature type="transmembrane region" description="Helical" evidence="3">
    <location>
        <begin position="269"/>
        <end position="289"/>
    </location>
</feature>
<feature type="topological domain" description="Cytoplasmic" evidence="3">
    <location>
        <begin position="290"/>
        <end position="323"/>
    </location>
</feature>
<feature type="domain" description="Ig-like V-type">
    <location>
        <begin position="19"/>
        <end position="127"/>
    </location>
</feature>
<feature type="modified residue" description="Pyrrolidone carboxylic acid" evidence="9">
    <location>
        <position position="19"/>
    </location>
</feature>
<feature type="modified residue" description="Phosphoserine" evidence="1">
    <location>
        <position position="89"/>
    </location>
</feature>
<feature type="glycosylation site" description="N-linked (GlcNAc...) asparagine" evidence="9">
    <location>
        <position position="23"/>
    </location>
</feature>
<feature type="glycosylation site" description="N-linked (GlcNAc...) asparagine">
    <location>
        <position position="34"/>
    </location>
</feature>
<feature type="glycosylation site" description="N-linked (GlcNAc...) asparagine" evidence="9 12">
    <location>
        <position position="50"/>
    </location>
</feature>
<feature type="glycosylation site" description="N-linked (GlcNAc...) asparagine" evidence="9 11 12">
    <location>
        <position position="73"/>
    </location>
</feature>
<feature type="glycosylation site" description="N-linked (GlcNAc...) asparagine" evidence="9 11">
    <location>
        <position position="111"/>
    </location>
</feature>
<feature type="glycosylation site" description="N-linked (GlcNAc...) asparagine" evidence="3">
    <location>
        <position position="206"/>
    </location>
</feature>
<feature type="disulfide bond" evidence="5">
    <location>
        <begin position="33"/>
        <end position="263"/>
    </location>
</feature>
<feature type="disulfide bond" evidence="9">
    <location>
        <begin position="41"/>
        <end position="114"/>
    </location>
</feature>
<feature type="splice variant" id="VSP_002535" description="In isoform OA3-293." evidence="22">
    <location>
        <begin position="293"/>
        <end position="323"/>
    </location>
</feature>
<feature type="splice variant" id="VSP_002536" description="In isoform OA3-305." evidence="19 20 21">
    <original>KA</original>
    <variation>NN</variation>
    <location>
        <begin position="304"/>
        <end position="305"/>
    </location>
</feature>
<feature type="splice variant" id="VSP_002537" description="In isoform OA3-305." evidence="19 20 21">
    <location>
        <begin position="306"/>
        <end position="323"/>
    </location>
</feature>
<feature type="splice variant" id="VSP_002538" description="In isoform OA3-312." evidence="22">
    <location>
        <begin position="312"/>
        <end position="323"/>
    </location>
</feature>
<feature type="strand" evidence="23">
    <location>
        <begin position="26"/>
        <end position="30"/>
    </location>
</feature>
<feature type="strand" evidence="23">
    <location>
        <begin position="35"/>
        <end position="39"/>
    </location>
</feature>
<feature type="strand" evidence="23">
    <location>
        <begin position="42"/>
        <end position="45"/>
    </location>
</feature>
<feature type="helix" evidence="23">
    <location>
        <begin position="51"/>
        <end position="53"/>
    </location>
</feature>
<feature type="strand" evidence="23">
    <location>
        <begin position="54"/>
        <end position="60"/>
    </location>
</feature>
<feature type="strand" evidence="23">
    <location>
        <begin position="63"/>
        <end position="69"/>
    </location>
</feature>
<feature type="helix" evidence="23">
    <location>
        <begin position="70"/>
        <end position="72"/>
    </location>
</feature>
<feature type="strand" evidence="23">
    <location>
        <begin position="74"/>
        <end position="76"/>
    </location>
</feature>
<feature type="helix" evidence="23">
    <location>
        <begin position="79"/>
        <end position="81"/>
    </location>
</feature>
<feature type="helix" evidence="23">
    <location>
        <begin position="88"/>
        <end position="93"/>
    </location>
</feature>
<feature type="strand" evidence="23">
    <location>
        <begin position="98"/>
        <end position="101"/>
    </location>
</feature>
<feature type="helix" evidence="23">
    <location>
        <begin position="102"/>
        <end position="106"/>
    </location>
</feature>
<feature type="strand" evidence="23">
    <location>
        <begin position="110"/>
        <end position="118"/>
    </location>
</feature>
<feature type="strand" evidence="23">
    <location>
        <begin position="121"/>
        <end position="131"/>
    </location>
</feature>
<feature type="turn" evidence="24">
    <location>
        <begin position="139"/>
        <end position="143"/>
    </location>
</feature>
<feature type="helix" evidence="24">
    <location>
        <begin position="144"/>
        <end position="164"/>
    </location>
</feature>
<feature type="helix" evidence="24">
    <location>
        <begin position="178"/>
        <end position="196"/>
    </location>
</feature>
<feature type="strand" evidence="24">
    <location>
        <begin position="197"/>
        <end position="202"/>
    </location>
</feature>
<feature type="helix" evidence="24">
    <location>
        <begin position="204"/>
        <end position="224"/>
    </location>
</feature>
<feature type="helix" evidence="24">
    <location>
        <begin position="238"/>
        <end position="253"/>
    </location>
</feature>
<feature type="turn" evidence="24">
    <location>
        <begin position="254"/>
        <end position="260"/>
    </location>
</feature>
<feature type="strand" evidence="24">
    <location>
        <begin position="261"/>
        <end position="264"/>
    </location>
</feature>
<feature type="helix" evidence="24">
    <location>
        <begin position="268"/>
        <end position="292"/>
    </location>
</feature>